<protein>
    <recommendedName>
        <fullName>Uncharacterized protein AF_1809</fullName>
    </recommendedName>
</protein>
<proteinExistence type="predicted"/>
<gene>
    <name type="ordered locus">AF_1809</name>
</gene>
<name>Y1809_ARCFU</name>
<reference key="1">
    <citation type="journal article" date="1997" name="Nature">
        <title>The complete genome sequence of the hyperthermophilic, sulphate-reducing archaeon Archaeoglobus fulgidus.</title>
        <authorList>
            <person name="Klenk H.-P."/>
            <person name="Clayton R.A."/>
            <person name="Tomb J.-F."/>
            <person name="White O."/>
            <person name="Nelson K.E."/>
            <person name="Ketchum K.A."/>
            <person name="Dodson R.J."/>
            <person name="Gwinn M.L."/>
            <person name="Hickey E.K."/>
            <person name="Peterson J.D."/>
            <person name="Richardson D.L."/>
            <person name="Kerlavage A.R."/>
            <person name="Graham D.E."/>
            <person name="Kyrpides N.C."/>
            <person name="Fleischmann R.D."/>
            <person name="Quackenbush J."/>
            <person name="Lee N.H."/>
            <person name="Sutton G.G."/>
            <person name="Gill S.R."/>
            <person name="Kirkness E.F."/>
            <person name="Dougherty B.A."/>
            <person name="McKenney K."/>
            <person name="Adams M.D."/>
            <person name="Loftus B.J."/>
            <person name="Peterson S.N."/>
            <person name="Reich C.I."/>
            <person name="McNeil L.K."/>
            <person name="Badger J.H."/>
            <person name="Glodek A."/>
            <person name="Zhou L."/>
            <person name="Overbeek R."/>
            <person name="Gocayne J.D."/>
            <person name="Weidman J.F."/>
            <person name="McDonald L.A."/>
            <person name="Utterback T.R."/>
            <person name="Cotton M.D."/>
            <person name="Spriggs T."/>
            <person name="Artiach P."/>
            <person name="Kaine B.P."/>
            <person name="Sykes S.M."/>
            <person name="Sadow P.W."/>
            <person name="D'Andrea K.P."/>
            <person name="Bowman C."/>
            <person name="Fujii C."/>
            <person name="Garland S.A."/>
            <person name="Mason T.M."/>
            <person name="Olsen G.J."/>
            <person name="Fraser C.M."/>
            <person name="Smith H.O."/>
            <person name="Woese C.R."/>
            <person name="Venter J.C."/>
        </authorList>
    </citation>
    <scope>NUCLEOTIDE SEQUENCE [LARGE SCALE GENOMIC DNA]</scope>
    <source>
        <strain>ATCC 49558 / DSM 4304 / JCM 9628 / NBRC 100126 / VC-16</strain>
    </source>
</reference>
<feature type="chain" id="PRO_0000128059" description="Uncharacterized protein AF_1809">
    <location>
        <begin position="1"/>
        <end position="88"/>
    </location>
</feature>
<keyword id="KW-1185">Reference proteome</keyword>
<accession>O28466</accession>
<dbReference type="EMBL" id="AE000782">
    <property type="protein sequence ID" value="AAB89452.1"/>
    <property type="molecule type" value="Genomic_DNA"/>
</dbReference>
<dbReference type="PIR" id="H69475">
    <property type="entry name" value="H69475"/>
</dbReference>
<dbReference type="STRING" id="224325.AF_1809"/>
<dbReference type="PaxDb" id="224325-AF_1809"/>
<dbReference type="DNASU" id="1485032"/>
<dbReference type="EnsemblBacteria" id="AAB89452">
    <property type="protein sequence ID" value="AAB89452"/>
    <property type="gene ID" value="AF_1809"/>
</dbReference>
<dbReference type="KEGG" id="afu:AF_1809"/>
<dbReference type="HOGENOM" id="CLU_2461593_0_0_2"/>
<dbReference type="Proteomes" id="UP000002199">
    <property type="component" value="Chromosome"/>
</dbReference>
<organism>
    <name type="scientific">Archaeoglobus fulgidus (strain ATCC 49558 / DSM 4304 / JCM 9628 / NBRC 100126 / VC-16)</name>
    <dbReference type="NCBI Taxonomy" id="224325"/>
    <lineage>
        <taxon>Archaea</taxon>
        <taxon>Methanobacteriati</taxon>
        <taxon>Methanobacteriota</taxon>
        <taxon>Archaeoglobi</taxon>
        <taxon>Archaeoglobales</taxon>
        <taxon>Archaeoglobaceae</taxon>
        <taxon>Archaeoglobus</taxon>
    </lineage>
</organism>
<sequence>MKSAFLVLLPLPSSTLQKMQLRLQPVMFLTCRRFAPLSIIPKAECPSKGIPLSLVTNTSSLPVTLFRTLFSSAKETMYSFEYLFSSLL</sequence>